<feature type="transit peptide" description="Mitochondrion" evidence="1">
    <location>
        <begin position="1"/>
        <end status="unknown"/>
    </location>
</feature>
<feature type="chain" id="PRO_0000020032" description="NADH-ubiquinone oxidoreductase 19.3 kDa subunit, mitochondrial">
    <location>
        <begin status="unknown"/>
        <end position="226"/>
    </location>
</feature>
<feature type="region of interest" description="Disordered" evidence="2">
    <location>
        <begin position="40"/>
        <end position="68"/>
    </location>
</feature>
<feature type="binding site" evidence="1">
    <location>
        <position position="101"/>
    </location>
    <ligand>
        <name>[4Fe-4S] cluster</name>
        <dbReference type="ChEBI" id="CHEBI:49883"/>
    </ligand>
</feature>
<feature type="binding site" evidence="1">
    <location>
        <position position="102"/>
    </location>
    <ligand>
        <name>[4Fe-4S] cluster</name>
        <dbReference type="ChEBI" id="CHEBI:49883"/>
    </ligand>
</feature>
<feature type="binding site" evidence="1">
    <location>
        <position position="166"/>
    </location>
    <ligand>
        <name>[4Fe-4S] cluster</name>
        <dbReference type="ChEBI" id="CHEBI:49883"/>
    </ligand>
</feature>
<feature type="binding site" evidence="1">
    <location>
        <position position="196"/>
    </location>
    <ligand>
        <name>[4Fe-4S] cluster</name>
        <dbReference type="ChEBI" id="CHEBI:49883"/>
    </ligand>
</feature>
<proteinExistence type="evidence at transcript level"/>
<sequence>MMSSVRTGASMALRARPTAQIVPFRAAAVASISSSSRKDATGAVAPAGAQHGIARRERREVPLPSQEGTKGAVQYALTTLDSIVNWARQSSLWPMTFGLACCAVEMMHLSTPRYDQDRLGIIFRASPRQSDVMIVAGTLTNKMAPALRQVYDQMPDPRWVISMGSCANGGGYYHYSYSVVRGCDRIVPVDIYVPGCPPTSEALMYGIFQLQRKMRNTKITRMWYRK</sequence>
<comment type="function">
    <text>Core subunit of the mitochondrial membrane respiratory chain NADH dehydrogenase (Complex I) that is believed to belong to the minimal assembly required for catalysis. Complex I functions in the transfer of electrons from NADH to the respiratory chain. The immediate electron acceptor for the enzyme is believed to be ubiquinone.</text>
</comment>
<comment type="catalytic activity">
    <reaction>
        <text>a ubiquinone + NADH + 5 H(+)(in) = a ubiquinol + NAD(+) + 4 H(+)(out)</text>
        <dbReference type="Rhea" id="RHEA:29091"/>
        <dbReference type="Rhea" id="RHEA-COMP:9565"/>
        <dbReference type="Rhea" id="RHEA-COMP:9566"/>
        <dbReference type="ChEBI" id="CHEBI:15378"/>
        <dbReference type="ChEBI" id="CHEBI:16389"/>
        <dbReference type="ChEBI" id="CHEBI:17976"/>
        <dbReference type="ChEBI" id="CHEBI:57540"/>
        <dbReference type="ChEBI" id="CHEBI:57945"/>
        <dbReference type="EC" id="7.1.1.2"/>
    </reaction>
</comment>
<comment type="cofactor">
    <cofactor evidence="3">
        <name>[4Fe-4S] cluster</name>
        <dbReference type="ChEBI" id="CHEBI:49883"/>
    </cofactor>
    <text evidence="3">Binds 1 [4Fe-4S] cluster.</text>
</comment>
<comment type="subunit">
    <text>Complex I is composed of about 40 different subunits. This is a component of the iron-sulfur (IP) fragment of the enzyme.</text>
</comment>
<comment type="subcellular location">
    <subcellularLocation>
        <location>Mitochondrion</location>
    </subcellularLocation>
</comment>
<comment type="similarity">
    <text evidence="3">Belongs to the complex I 20 kDa subunit family.</text>
</comment>
<organism>
    <name type="scientific">Neurospora crassa (strain ATCC 24698 / 74-OR23-1A / CBS 708.71 / DSM 1257 / FGSC 987)</name>
    <dbReference type="NCBI Taxonomy" id="367110"/>
    <lineage>
        <taxon>Eukaryota</taxon>
        <taxon>Fungi</taxon>
        <taxon>Dikarya</taxon>
        <taxon>Ascomycota</taxon>
        <taxon>Pezizomycotina</taxon>
        <taxon>Sordariomycetes</taxon>
        <taxon>Sordariomycetidae</taxon>
        <taxon>Sordariales</taxon>
        <taxon>Sordariaceae</taxon>
        <taxon>Neurospora</taxon>
    </lineage>
</organism>
<keyword id="KW-0004">4Fe-4S</keyword>
<keyword id="KW-0249">Electron transport</keyword>
<keyword id="KW-0408">Iron</keyword>
<keyword id="KW-0411">Iron-sulfur</keyword>
<keyword id="KW-0479">Metal-binding</keyword>
<keyword id="KW-0496">Mitochondrion</keyword>
<keyword id="KW-0520">NAD</keyword>
<keyword id="KW-0560">Oxidoreductase</keyword>
<keyword id="KW-1185">Reference proteome</keyword>
<keyword id="KW-0679">Respiratory chain</keyword>
<keyword id="KW-0809">Transit peptide</keyword>
<keyword id="KW-1278">Translocase</keyword>
<keyword id="KW-0813">Transport</keyword>
<keyword id="KW-0830">Ubiquinone</keyword>
<dbReference type="EC" id="7.1.1.2"/>
<dbReference type="EMBL" id="AJ001520">
    <property type="protein sequence ID" value="CAA04802.1"/>
    <property type="molecule type" value="mRNA"/>
</dbReference>
<dbReference type="EMBL" id="BX908812">
    <property type="protein sequence ID" value="CAF06152.1"/>
    <property type="molecule type" value="Genomic_DNA"/>
</dbReference>
<dbReference type="EMBL" id="CM002241">
    <property type="protein sequence ID" value="EAA28356.1"/>
    <property type="molecule type" value="Genomic_DNA"/>
</dbReference>
<dbReference type="SMR" id="O47950"/>
<dbReference type="STRING" id="367110.O47950"/>
<dbReference type="TCDB" id="3.D.1.6.2">
    <property type="family name" value="the h+ or na+-translocating nadh dehydrogenase (ndh) family"/>
</dbReference>
<dbReference type="PaxDb" id="5141-EFNCRP00000003665"/>
<dbReference type="EnsemblFungi" id="EAA28356">
    <property type="protein sequence ID" value="EAA28356"/>
    <property type="gene ID" value="NCU03953"/>
</dbReference>
<dbReference type="KEGG" id="ncr:NCU03953"/>
<dbReference type="VEuPathDB" id="FungiDB:NCU03953"/>
<dbReference type="HOGENOM" id="CLU_055737_1_0_1"/>
<dbReference type="InParanoid" id="O47950"/>
<dbReference type="OMA" id="GCGGIEM"/>
<dbReference type="OrthoDB" id="268400at2759"/>
<dbReference type="Proteomes" id="UP000001805">
    <property type="component" value="Chromosome 5, Linkage Group VI"/>
</dbReference>
<dbReference type="GO" id="GO:0005739">
    <property type="term" value="C:mitochondrion"/>
    <property type="evidence" value="ECO:0007669"/>
    <property type="project" value="UniProtKB-SubCell"/>
</dbReference>
<dbReference type="GO" id="GO:0045271">
    <property type="term" value="C:respiratory chain complex I"/>
    <property type="evidence" value="ECO:0000318"/>
    <property type="project" value="GO_Central"/>
</dbReference>
<dbReference type="GO" id="GO:0051539">
    <property type="term" value="F:4 iron, 4 sulfur cluster binding"/>
    <property type="evidence" value="ECO:0007669"/>
    <property type="project" value="UniProtKB-KW"/>
</dbReference>
<dbReference type="GO" id="GO:0046872">
    <property type="term" value="F:metal ion binding"/>
    <property type="evidence" value="ECO:0007669"/>
    <property type="project" value="UniProtKB-KW"/>
</dbReference>
<dbReference type="GO" id="GO:0008137">
    <property type="term" value="F:NADH dehydrogenase (ubiquinone) activity"/>
    <property type="evidence" value="ECO:0000318"/>
    <property type="project" value="GO_Central"/>
</dbReference>
<dbReference type="GO" id="GO:0048038">
    <property type="term" value="F:quinone binding"/>
    <property type="evidence" value="ECO:0007669"/>
    <property type="project" value="InterPro"/>
</dbReference>
<dbReference type="GO" id="GO:0009060">
    <property type="term" value="P:aerobic respiration"/>
    <property type="evidence" value="ECO:0000318"/>
    <property type="project" value="GO_Central"/>
</dbReference>
<dbReference type="GO" id="GO:0015990">
    <property type="term" value="P:electron transport coupled proton transport"/>
    <property type="evidence" value="ECO:0000318"/>
    <property type="project" value="GO_Central"/>
</dbReference>
<dbReference type="GO" id="GO:0032981">
    <property type="term" value="P:mitochondrial respiratory chain complex I assembly"/>
    <property type="evidence" value="ECO:0000318"/>
    <property type="project" value="GO_Central"/>
</dbReference>
<dbReference type="FunFam" id="3.40.50.12280:FF:000001">
    <property type="entry name" value="NADH-quinone oxidoreductase subunit B 2"/>
    <property type="match status" value="1"/>
</dbReference>
<dbReference type="Gene3D" id="3.40.50.12280">
    <property type="match status" value="1"/>
</dbReference>
<dbReference type="HAMAP" id="MF_01356">
    <property type="entry name" value="NDH1_NuoB"/>
    <property type="match status" value="1"/>
</dbReference>
<dbReference type="InterPro" id="IPR006137">
    <property type="entry name" value="NADH_UbQ_OxRdtase-like_20kDa"/>
</dbReference>
<dbReference type="InterPro" id="IPR006138">
    <property type="entry name" value="NADH_UQ_OxRdtase_20Kd_su"/>
</dbReference>
<dbReference type="NCBIfam" id="TIGR01957">
    <property type="entry name" value="nuoB_fam"/>
    <property type="match status" value="1"/>
</dbReference>
<dbReference type="NCBIfam" id="NF005012">
    <property type="entry name" value="PRK06411.1"/>
    <property type="match status" value="1"/>
</dbReference>
<dbReference type="PANTHER" id="PTHR11995">
    <property type="entry name" value="NADH DEHYDROGENASE"/>
    <property type="match status" value="1"/>
</dbReference>
<dbReference type="PANTHER" id="PTHR11995:SF14">
    <property type="entry name" value="NADH DEHYDROGENASE [UBIQUINONE] IRON-SULFUR PROTEIN 7, MITOCHONDRIAL"/>
    <property type="match status" value="1"/>
</dbReference>
<dbReference type="Pfam" id="PF01058">
    <property type="entry name" value="Oxidored_q6"/>
    <property type="match status" value="1"/>
</dbReference>
<dbReference type="SUPFAM" id="SSF56770">
    <property type="entry name" value="HydA/Nqo6-like"/>
    <property type="match status" value="1"/>
</dbReference>
<dbReference type="PROSITE" id="PS01150">
    <property type="entry name" value="COMPLEX1_20K"/>
    <property type="match status" value="1"/>
</dbReference>
<protein>
    <recommendedName>
        <fullName>NADH-ubiquinone oxidoreductase 19.3 kDa subunit, mitochondrial</fullName>
        <ecNumber>7.1.1.2</ecNumber>
    </recommendedName>
    <alternativeName>
        <fullName>Complex I-19.3kD</fullName>
        <shortName>CI-19.3kD</shortName>
    </alternativeName>
</protein>
<evidence type="ECO:0000255" key="1"/>
<evidence type="ECO:0000256" key="2">
    <source>
        <dbReference type="SAM" id="MobiDB-lite"/>
    </source>
</evidence>
<evidence type="ECO:0000305" key="3"/>
<gene>
    <name type="ORF">G17A4.170</name>
    <name type="ORF">NCU03953</name>
</gene>
<reference key="1">
    <citation type="journal article" date="1999" name="Biochim. Biophys. Acta">
        <title>Characterisation of the last Fe-S cluster-binding subunit of Neurospora crassa complex I.</title>
        <authorList>
            <person name="Sousa R."/>
            <person name="Barquera B."/>
            <person name="Duarte M."/>
            <person name="Finel M."/>
            <person name="Videira A."/>
        </authorList>
    </citation>
    <scope>NUCLEOTIDE SEQUENCE [MRNA]</scope>
</reference>
<reference key="2">
    <citation type="journal article" date="2003" name="Nucleic Acids Res.">
        <title>What's in the genome of a filamentous fungus? Analysis of the Neurospora genome sequence.</title>
        <authorList>
            <person name="Mannhaupt G."/>
            <person name="Montrone C."/>
            <person name="Haase D."/>
            <person name="Mewes H.-W."/>
            <person name="Aign V."/>
            <person name="Hoheisel J.D."/>
            <person name="Fartmann B."/>
            <person name="Nyakatura G."/>
            <person name="Kempken F."/>
            <person name="Maier J."/>
            <person name="Schulte U."/>
        </authorList>
    </citation>
    <scope>NUCLEOTIDE SEQUENCE [LARGE SCALE GENOMIC DNA]</scope>
    <source>
        <strain>ATCC 24698 / 74-OR23-1A / CBS 708.71 / DSM 1257 / FGSC 987</strain>
    </source>
</reference>
<reference key="3">
    <citation type="journal article" date="2003" name="Nature">
        <title>The genome sequence of the filamentous fungus Neurospora crassa.</title>
        <authorList>
            <person name="Galagan J.E."/>
            <person name="Calvo S.E."/>
            <person name="Borkovich K.A."/>
            <person name="Selker E.U."/>
            <person name="Read N.D."/>
            <person name="Jaffe D.B."/>
            <person name="FitzHugh W."/>
            <person name="Ma L.-J."/>
            <person name="Smirnov S."/>
            <person name="Purcell S."/>
            <person name="Rehman B."/>
            <person name="Elkins T."/>
            <person name="Engels R."/>
            <person name="Wang S."/>
            <person name="Nielsen C.B."/>
            <person name="Butler J."/>
            <person name="Endrizzi M."/>
            <person name="Qui D."/>
            <person name="Ianakiev P."/>
            <person name="Bell-Pedersen D."/>
            <person name="Nelson M.A."/>
            <person name="Werner-Washburne M."/>
            <person name="Selitrennikoff C.P."/>
            <person name="Kinsey J.A."/>
            <person name="Braun E.L."/>
            <person name="Zelter A."/>
            <person name="Schulte U."/>
            <person name="Kothe G.O."/>
            <person name="Jedd G."/>
            <person name="Mewes H.-W."/>
            <person name="Staben C."/>
            <person name="Marcotte E."/>
            <person name="Greenberg D."/>
            <person name="Roy A."/>
            <person name="Foley K."/>
            <person name="Naylor J."/>
            <person name="Stange-Thomann N."/>
            <person name="Barrett R."/>
            <person name="Gnerre S."/>
            <person name="Kamal M."/>
            <person name="Kamvysselis M."/>
            <person name="Mauceli E.W."/>
            <person name="Bielke C."/>
            <person name="Rudd S."/>
            <person name="Frishman D."/>
            <person name="Krystofova S."/>
            <person name="Rasmussen C."/>
            <person name="Metzenberg R.L."/>
            <person name="Perkins D.D."/>
            <person name="Kroken S."/>
            <person name="Cogoni C."/>
            <person name="Macino G."/>
            <person name="Catcheside D.E.A."/>
            <person name="Li W."/>
            <person name="Pratt R.J."/>
            <person name="Osmani S.A."/>
            <person name="DeSouza C.P.C."/>
            <person name="Glass N.L."/>
            <person name="Orbach M.J."/>
            <person name="Berglund J.A."/>
            <person name="Voelker R."/>
            <person name="Yarden O."/>
            <person name="Plamann M."/>
            <person name="Seiler S."/>
            <person name="Dunlap J.C."/>
            <person name="Radford A."/>
            <person name="Aramayo R."/>
            <person name="Natvig D.O."/>
            <person name="Alex L.A."/>
            <person name="Mannhaupt G."/>
            <person name="Ebbole D.J."/>
            <person name="Freitag M."/>
            <person name="Paulsen I."/>
            <person name="Sachs M.S."/>
            <person name="Lander E.S."/>
            <person name="Nusbaum C."/>
            <person name="Birren B.W."/>
        </authorList>
    </citation>
    <scope>NUCLEOTIDE SEQUENCE [LARGE SCALE GENOMIC DNA]</scope>
    <source>
        <strain>ATCC 24698 / 74-OR23-1A / CBS 708.71 / DSM 1257 / FGSC 987</strain>
    </source>
</reference>
<name>NDUS7_NEUCR</name>
<accession>O47950</accession>
<accession>Q7RZB4</accession>